<organism>
    <name type="scientific">Scalopus aquaticus</name>
    <name type="common">Eastern mole</name>
    <name type="synonym">Sorex aquaticus</name>
    <dbReference type="NCBI Taxonomy" id="71119"/>
    <lineage>
        <taxon>Eukaryota</taxon>
        <taxon>Metazoa</taxon>
        <taxon>Chordata</taxon>
        <taxon>Craniata</taxon>
        <taxon>Vertebrata</taxon>
        <taxon>Euteleostomi</taxon>
        <taxon>Mammalia</taxon>
        <taxon>Eutheria</taxon>
        <taxon>Laurasiatheria</taxon>
        <taxon>Eulipotyphla</taxon>
        <taxon>Talpidae</taxon>
        <taxon>Scalopus</taxon>
    </lineage>
</organism>
<sequence>MVHMSAEEKGIVTSMWGKVNVDDIGAEALGRLLVVYPWTQRFFDSFGDLSSPAAIMGNPKVKAHGKKVAHSISDGIKNLDNLKGTYAKLSELHCDKLHVDPENFRLLGNVLVCVLARNLGKEFTPHARTAFQKMVLEVAAALAHKYH</sequence>
<protein>
    <recommendedName>
        <fullName>Hemoglobin subunit beta</fullName>
    </recommendedName>
    <alternativeName>
        <fullName>Beta-globin</fullName>
    </alternativeName>
    <alternativeName>
        <fullName>Hemoglobin beta chain</fullName>
    </alternativeName>
</protein>
<gene>
    <name type="primary">HBB</name>
</gene>
<name>HBB_SCAAQ</name>
<keyword id="KW-0007">Acetylation</keyword>
<keyword id="KW-0349">Heme</keyword>
<keyword id="KW-0408">Iron</keyword>
<keyword id="KW-0479">Metal-binding</keyword>
<keyword id="KW-0561">Oxygen transport</keyword>
<keyword id="KW-0597">Phosphoprotein</keyword>
<keyword id="KW-0702">S-nitrosylation</keyword>
<keyword id="KW-0813">Transport</keyword>
<accession>Q2KPA4</accession>
<evidence type="ECO:0000250" key="1">
    <source>
        <dbReference type="UniProtKB" id="P02086"/>
    </source>
</evidence>
<evidence type="ECO:0000250" key="2">
    <source>
        <dbReference type="UniProtKB" id="P68871"/>
    </source>
</evidence>
<evidence type="ECO:0000255" key="3">
    <source>
        <dbReference type="PROSITE-ProRule" id="PRU00238"/>
    </source>
</evidence>
<comment type="function">
    <text>Involved in oxygen transport from the lung to the various peripheral tissues.</text>
</comment>
<comment type="subunit">
    <text>Heterotetramer of two alpha chains and two beta chains.</text>
</comment>
<comment type="tissue specificity">
    <text>Red blood cells.</text>
</comment>
<comment type="similarity">
    <text evidence="3">Belongs to the globin family.</text>
</comment>
<reference key="1">
    <citation type="submission" date="2004-11" db="EMBL/GenBank/DDBJ databases">
        <title>Recent evolution of a novel low O2 affinity, DPG-insensitive haemoglobin in a strictly fossorial mole.</title>
        <authorList>
            <person name="Campbell K.L."/>
            <person name="Weber R.E."/>
        </authorList>
    </citation>
    <scope>NUCLEOTIDE SEQUENCE [GENOMIC DNA]</scope>
    <source>
        <strain>Isolate Saq-1</strain>
        <tissue>Spleen</tissue>
    </source>
</reference>
<proteinExistence type="evidence at transcript level"/>
<dbReference type="EMBL" id="AY842447">
    <property type="protein sequence ID" value="AAW80623.1"/>
    <property type="molecule type" value="Genomic_DNA"/>
</dbReference>
<dbReference type="SMR" id="Q2KPA4"/>
<dbReference type="GO" id="GO:0072562">
    <property type="term" value="C:blood microparticle"/>
    <property type="evidence" value="ECO:0007669"/>
    <property type="project" value="TreeGrafter"/>
</dbReference>
<dbReference type="GO" id="GO:0031838">
    <property type="term" value="C:haptoglobin-hemoglobin complex"/>
    <property type="evidence" value="ECO:0007669"/>
    <property type="project" value="TreeGrafter"/>
</dbReference>
<dbReference type="GO" id="GO:0005833">
    <property type="term" value="C:hemoglobin complex"/>
    <property type="evidence" value="ECO:0007669"/>
    <property type="project" value="InterPro"/>
</dbReference>
<dbReference type="GO" id="GO:0031720">
    <property type="term" value="F:haptoglobin binding"/>
    <property type="evidence" value="ECO:0007669"/>
    <property type="project" value="TreeGrafter"/>
</dbReference>
<dbReference type="GO" id="GO:0020037">
    <property type="term" value="F:heme binding"/>
    <property type="evidence" value="ECO:0007669"/>
    <property type="project" value="InterPro"/>
</dbReference>
<dbReference type="GO" id="GO:0031721">
    <property type="term" value="F:hemoglobin alpha binding"/>
    <property type="evidence" value="ECO:0007669"/>
    <property type="project" value="TreeGrafter"/>
</dbReference>
<dbReference type="GO" id="GO:0046872">
    <property type="term" value="F:metal ion binding"/>
    <property type="evidence" value="ECO:0007669"/>
    <property type="project" value="UniProtKB-KW"/>
</dbReference>
<dbReference type="GO" id="GO:0043177">
    <property type="term" value="F:organic acid binding"/>
    <property type="evidence" value="ECO:0007669"/>
    <property type="project" value="TreeGrafter"/>
</dbReference>
<dbReference type="GO" id="GO:0019825">
    <property type="term" value="F:oxygen binding"/>
    <property type="evidence" value="ECO:0007669"/>
    <property type="project" value="InterPro"/>
</dbReference>
<dbReference type="GO" id="GO:0005344">
    <property type="term" value="F:oxygen carrier activity"/>
    <property type="evidence" value="ECO:0007669"/>
    <property type="project" value="UniProtKB-KW"/>
</dbReference>
<dbReference type="GO" id="GO:0004601">
    <property type="term" value="F:peroxidase activity"/>
    <property type="evidence" value="ECO:0007669"/>
    <property type="project" value="TreeGrafter"/>
</dbReference>
<dbReference type="GO" id="GO:0042744">
    <property type="term" value="P:hydrogen peroxide catabolic process"/>
    <property type="evidence" value="ECO:0007669"/>
    <property type="project" value="TreeGrafter"/>
</dbReference>
<dbReference type="CDD" id="cd08925">
    <property type="entry name" value="Hb-beta-like"/>
    <property type="match status" value="1"/>
</dbReference>
<dbReference type="FunFam" id="1.10.490.10:FF:000001">
    <property type="entry name" value="Hemoglobin subunit beta"/>
    <property type="match status" value="1"/>
</dbReference>
<dbReference type="Gene3D" id="1.10.490.10">
    <property type="entry name" value="Globins"/>
    <property type="match status" value="1"/>
</dbReference>
<dbReference type="InterPro" id="IPR000971">
    <property type="entry name" value="Globin"/>
</dbReference>
<dbReference type="InterPro" id="IPR009050">
    <property type="entry name" value="Globin-like_sf"/>
</dbReference>
<dbReference type="InterPro" id="IPR012292">
    <property type="entry name" value="Globin/Proto"/>
</dbReference>
<dbReference type="InterPro" id="IPR002337">
    <property type="entry name" value="Hemoglobin_b"/>
</dbReference>
<dbReference type="InterPro" id="IPR050056">
    <property type="entry name" value="Hemoglobin_oxygen_transport"/>
</dbReference>
<dbReference type="PANTHER" id="PTHR11442">
    <property type="entry name" value="HEMOGLOBIN FAMILY MEMBER"/>
    <property type="match status" value="1"/>
</dbReference>
<dbReference type="PANTHER" id="PTHR11442:SF42">
    <property type="entry name" value="HEMOGLOBIN SUBUNIT BETA"/>
    <property type="match status" value="1"/>
</dbReference>
<dbReference type="Pfam" id="PF00042">
    <property type="entry name" value="Globin"/>
    <property type="match status" value="1"/>
</dbReference>
<dbReference type="PRINTS" id="PR00814">
    <property type="entry name" value="BETAHAEM"/>
</dbReference>
<dbReference type="SUPFAM" id="SSF46458">
    <property type="entry name" value="Globin-like"/>
    <property type="match status" value="1"/>
</dbReference>
<dbReference type="PROSITE" id="PS01033">
    <property type="entry name" value="GLOBIN"/>
    <property type="match status" value="1"/>
</dbReference>
<feature type="initiator methionine" description="Removed" evidence="1">
    <location>
        <position position="1"/>
    </location>
</feature>
<feature type="chain" id="PRO_0000231015" description="Hemoglobin subunit beta">
    <location>
        <begin position="2"/>
        <end position="147"/>
    </location>
</feature>
<feature type="domain" description="Globin" evidence="3">
    <location>
        <begin position="3"/>
        <end position="147"/>
    </location>
</feature>
<feature type="binding site" description="distal binding residue">
    <location>
        <position position="64"/>
    </location>
    <ligand>
        <name>heme b</name>
        <dbReference type="ChEBI" id="CHEBI:60344"/>
    </ligand>
    <ligandPart>
        <name>Fe</name>
        <dbReference type="ChEBI" id="CHEBI:18248"/>
    </ligandPart>
</feature>
<feature type="binding site" description="proximal binding residue">
    <location>
        <position position="93"/>
    </location>
    <ligand>
        <name>heme b</name>
        <dbReference type="ChEBI" id="CHEBI:60344"/>
    </ligand>
    <ligandPart>
        <name>Fe</name>
        <dbReference type="ChEBI" id="CHEBI:18248"/>
    </ligandPart>
</feature>
<feature type="modified residue" description="N-acetylvaline" evidence="1">
    <location>
        <position position="2"/>
    </location>
</feature>
<feature type="modified residue" description="Phosphothreonine" evidence="2">
    <location>
        <position position="13"/>
    </location>
</feature>
<feature type="modified residue" description="Phosphoserine" evidence="2">
    <location>
        <position position="45"/>
    </location>
</feature>
<feature type="modified residue" description="N6-acetyllysine" evidence="2">
    <location>
        <position position="60"/>
    </location>
</feature>
<feature type="modified residue" description="N6-acetyllysine" evidence="2">
    <location>
        <position position="83"/>
    </location>
</feature>
<feature type="modified residue" description="S-nitrosocysteine" evidence="2">
    <location>
        <position position="94"/>
    </location>
</feature>
<feature type="modified residue" description="N6-acetyllysine" evidence="2">
    <location>
        <position position="145"/>
    </location>
</feature>